<proteinExistence type="inferred from homology"/>
<evidence type="ECO:0000255" key="1">
    <source>
        <dbReference type="HAMAP-Rule" id="MF_00059"/>
    </source>
</evidence>
<comment type="function">
    <text evidence="1">DNA-dependent RNA polymerase catalyzes the transcription of DNA into RNA using the four ribonucleoside triphosphates as substrates.</text>
</comment>
<comment type="catalytic activity">
    <reaction evidence="1">
        <text>RNA(n) + a ribonucleoside 5'-triphosphate = RNA(n+1) + diphosphate</text>
        <dbReference type="Rhea" id="RHEA:21248"/>
        <dbReference type="Rhea" id="RHEA-COMP:14527"/>
        <dbReference type="Rhea" id="RHEA-COMP:17342"/>
        <dbReference type="ChEBI" id="CHEBI:33019"/>
        <dbReference type="ChEBI" id="CHEBI:61557"/>
        <dbReference type="ChEBI" id="CHEBI:140395"/>
        <dbReference type="EC" id="2.7.7.6"/>
    </reaction>
</comment>
<comment type="subunit">
    <text evidence="1">In cyanobacteria the RNAP catalytic core is composed of 2 alpha, 1 beta, 1 beta', 1 gamma and 1 omega subunit. When a sigma factor is associated with the core the holoenzyme is formed, which can initiate transcription.</text>
</comment>
<comment type="domain">
    <text evidence="1">The N-terminal domain is essential for RNAP assembly and basal transcription, whereas the C-terminal domain is involved in interaction with transcriptional regulators and with upstream promoter elements.</text>
</comment>
<comment type="similarity">
    <text evidence="1">Belongs to the RNA polymerase alpha chain family.</text>
</comment>
<reference key="1">
    <citation type="journal article" date="2003" name="Nature">
        <title>Genome divergence in two Prochlorococcus ecotypes reflects oceanic niche differentiation.</title>
        <authorList>
            <person name="Rocap G."/>
            <person name="Larimer F.W."/>
            <person name="Lamerdin J.E."/>
            <person name="Malfatti S."/>
            <person name="Chain P."/>
            <person name="Ahlgren N.A."/>
            <person name="Arellano A."/>
            <person name="Coleman M."/>
            <person name="Hauser L."/>
            <person name="Hess W.R."/>
            <person name="Johnson Z.I."/>
            <person name="Land M.L."/>
            <person name="Lindell D."/>
            <person name="Post A.F."/>
            <person name="Regala W."/>
            <person name="Shah M."/>
            <person name="Shaw S.L."/>
            <person name="Steglich C."/>
            <person name="Sullivan M.B."/>
            <person name="Ting C.S."/>
            <person name="Tolonen A."/>
            <person name="Webb E.A."/>
            <person name="Zinser E.R."/>
            <person name="Chisholm S.W."/>
        </authorList>
    </citation>
    <scope>NUCLEOTIDE SEQUENCE [LARGE SCALE GENOMIC DNA]</scope>
    <source>
        <strain>CCMP1986 / NIES-2087 / MED4</strain>
    </source>
</reference>
<gene>
    <name evidence="1" type="primary">rpoA</name>
    <name type="ordered locus">PMM1535</name>
</gene>
<accession>Q7UZW6</accession>
<sequence>MLQYQIDRIDHQISDDRSQTGTFLIGPLERGQATTLGNSLRRVLMGGLEGSAVTAVRISGINHEYATIPGVREDVLDILLNCKQLSINSSNPETEIGRLVVNGPMEVKANDIQFSSQVEIVDGEKPIATIQEGHNLELEIHVERGVGYRPVDRRNQETTAIDLLQIDAVFMPVKRVNFTIDETAVAEGATGRERLTMEVVTDGSTSPDDAIAEAANQLIELFQPLATVTMVEEIPEEPEPSPEAQIPLEELNLSVRAYNCLKRAQVNSVSDLMGFSYEDLLEIKNFGSKSADEVIEALERIGISIPQSRTSV</sequence>
<name>RPOA_PROMP</name>
<organism>
    <name type="scientific">Prochlorococcus marinus subsp. pastoris (strain CCMP1986 / NIES-2087 / MED4)</name>
    <dbReference type="NCBI Taxonomy" id="59919"/>
    <lineage>
        <taxon>Bacteria</taxon>
        <taxon>Bacillati</taxon>
        <taxon>Cyanobacteriota</taxon>
        <taxon>Cyanophyceae</taxon>
        <taxon>Synechococcales</taxon>
        <taxon>Prochlorococcaceae</taxon>
        <taxon>Prochlorococcus</taxon>
    </lineage>
</organism>
<protein>
    <recommendedName>
        <fullName evidence="1">DNA-directed RNA polymerase subunit alpha</fullName>
        <shortName evidence="1">RNAP subunit alpha</shortName>
        <ecNumber evidence="1">2.7.7.6</ecNumber>
    </recommendedName>
    <alternativeName>
        <fullName evidence="1">RNA polymerase subunit alpha</fullName>
    </alternativeName>
    <alternativeName>
        <fullName evidence="1">Transcriptase subunit alpha</fullName>
    </alternativeName>
</protein>
<feature type="chain" id="PRO_0000175358" description="DNA-directed RNA polymerase subunit alpha">
    <location>
        <begin position="1"/>
        <end position="312"/>
    </location>
</feature>
<feature type="region of interest" description="Alpha N-terminal domain (alpha-NTD)" evidence="1">
    <location>
        <begin position="1"/>
        <end position="229"/>
    </location>
</feature>
<feature type="region of interest" description="Alpha C-terminal domain (alpha-CTD)" evidence="1">
    <location>
        <begin position="246"/>
        <end position="312"/>
    </location>
</feature>
<dbReference type="EC" id="2.7.7.6" evidence="1"/>
<dbReference type="EMBL" id="BX548174">
    <property type="protein sequence ID" value="CAE19994.1"/>
    <property type="molecule type" value="Genomic_DNA"/>
</dbReference>
<dbReference type="RefSeq" id="WP_011133163.1">
    <property type="nucleotide sequence ID" value="NC_005072.1"/>
</dbReference>
<dbReference type="SMR" id="Q7UZW6"/>
<dbReference type="STRING" id="59919.PMM1535"/>
<dbReference type="KEGG" id="pmm:PMM1535"/>
<dbReference type="eggNOG" id="COG0202">
    <property type="taxonomic scope" value="Bacteria"/>
</dbReference>
<dbReference type="HOGENOM" id="CLU_053084_0_1_3"/>
<dbReference type="OrthoDB" id="9805706at2"/>
<dbReference type="Proteomes" id="UP000001026">
    <property type="component" value="Chromosome"/>
</dbReference>
<dbReference type="GO" id="GO:0005737">
    <property type="term" value="C:cytoplasm"/>
    <property type="evidence" value="ECO:0007669"/>
    <property type="project" value="UniProtKB-ARBA"/>
</dbReference>
<dbReference type="GO" id="GO:0000428">
    <property type="term" value="C:DNA-directed RNA polymerase complex"/>
    <property type="evidence" value="ECO:0007669"/>
    <property type="project" value="UniProtKB-KW"/>
</dbReference>
<dbReference type="GO" id="GO:0003677">
    <property type="term" value="F:DNA binding"/>
    <property type="evidence" value="ECO:0007669"/>
    <property type="project" value="UniProtKB-UniRule"/>
</dbReference>
<dbReference type="GO" id="GO:0003899">
    <property type="term" value="F:DNA-directed RNA polymerase activity"/>
    <property type="evidence" value="ECO:0007669"/>
    <property type="project" value="UniProtKB-UniRule"/>
</dbReference>
<dbReference type="GO" id="GO:0046983">
    <property type="term" value="F:protein dimerization activity"/>
    <property type="evidence" value="ECO:0007669"/>
    <property type="project" value="InterPro"/>
</dbReference>
<dbReference type="GO" id="GO:0006351">
    <property type="term" value="P:DNA-templated transcription"/>
    <property type="evidence" value="ECO:0007669"/>
    <property type="project" value="UniProtKB-UniRule"/>
</dbReference>
<dbReference type="CDD" id="cd06928">
    <property type="entry name" value="RNAP_alpha_NTD"/>
    <property type="match status" value="1"/>
</dbReference>
<dbReference type="FunFam" id="2.170.120.12:FF:000001">
    <property type="entry name" value="DNA-directed RNA polymerase subunit alpha"/>
    <property type="match status" value="1"/>
</dbReference>
<dbReference type="Gene3D" id="1.10.150.20">
    <property type="entry name" value="5' to 3' exonuclease, C-terminal subdomain"/>
    <property type="match status" value="1"/>
</dbReference>
<dbReference type="Gene3D" id="2.170.120.12">
    <property type="entry name" value="DNA-directed RNA polymerase, insert domain"/>
    <property type="match status" value="1"/>
</dbReference>
<dbReference type="Gene3D" id="3.30.1360.10">
    <property type="entry name" value="RNA polymerase, RBP11-like subunit"/>
    <property type="match status" value="1"/>
</dbReference>
<dbReference type="HAMAP" id="MF_00059">
    <property type="entry name" value="RNApol_bact_RpoA"/>
    <property type="match status" value="1"/>
</dbReference>
<dbReference type="InterPro" id="IPR011262">
    <property type="entry name" value="DNA-dir_RNA_pol_insert"/>
</dbReference>
<dbReference type="InterPro" id="IPR011263">
    <property type="entry name" value="DNA-dir_RNA_pol_RpoA/D/Rpb3"/>
</dbReference>
<dbReference type="InterPro" id="IPR011773">
    <property type="entry name" value="DNA-dir_RpoA"/>
</dbReference>
<dbReference type="InterPro" id="IPR036603">
    <property type="entry name" value="RBP11-like"/>
</dbReference>
<dbReference type="InterPro" id="IPR011260">
    <property type="entry name" value="RNAP_asu_C"/>
</dbReference>
<dbReference type="InterPro" id="IPR036643">
    <property type="entry name" value="RNApol_insert_sf"/>
</dbReference>
<dbReference type="NCBIfam" id="NF003516">
    <property type="entry name" value="PRK05182.2-2"/>
    <property type="match status" value="1"/>
</dbReference>
<dbReference type="NCBIfam" id="NF003519">
    <property type="entry name" value="PRK05182.2-5"/>
    <property type="match status" value="1"/>
</dbReference>
<dbReference type="NCBIfam" id="TIGR02027">
    <property type="entry name" value="rpoA"/>
    <property type="match status" value="1"/>
</dbReference>
<dbReference type="Pfam" id="PF01000">
    <property type="entry name" value="RNA_pol_A_bac"/>
    <property type="match status" value="1"/>
</dbReference>
<dbReference type="Pfam" id="PF03118">
    <property type="entry name" value="RNA_pol_A_CTD"/>
    <property type="match status" value="1"/>
</dbReference>
<dbReference type="Pfam" id="PF01193">
    <property type="entry name" value="RNA_pol_L"/>
    <property type="match status" value="1"/>
</dbReference>
<dbReference type="SMART" id="SM00662">
    <property type="entry name" value="RPOLD"/>
    <property type="match status" value="1"/>
</dbReference>
<dbReference type="SUPFAM" id="SSF47789">
    <property type="entry name" value="C-terminal domain of RNA polymerase alpha subunit"/>
    <property type="match status" value="1"/>
</dbReference>
<dbReference type="SUPFAM" id="SSF56553">
    <property type="entry name" value="Insert subdomain of RNA polymerase alpha subunit"/>
    <property type="match status" value="1"/>
</dbReference>
<dbReference type="SUPFAM" id="SSF55257">
    <property type="entry name" value="RBP11-like subunits of RNA polymerase"/>
    <property type="match status" value="1"/>
</dbReference>
<keyword id="KW-0240">DNA-directed RNA polymerase</keyword>
<keyword id="KW-0548">Nucleotidyltransferase</keyword>
<keyword id="KW-0804">Transcription</keyword>
<keyword id="KW-0808">Transferase</keyword>